<dbReference type="EC" id="2.1.1.174" evidence="1"/>
<dbReference type="EMBL" id="AE006468">
    <property type="protein sequence ID" value="AAL22093.1"/>
    <property type="molecule type" value="Genomic_DNA"/>
</dbReference>
<dbReference type="RefSeq" id="WP_000019989.1">
    <property type="nucleotide sequence ID" value="NC_003197.2"/>
</dbReference>
<dbReference type="SMR" id="Q8ZLX5"/>
<dbReference type="STRING" id="99287.STM3220"/>
<dbReference type="PaxDb" id="99287-STM3220"/>
<dbReference type="KEGG" id="stm:STM3220"/>
<dbReference type="PATRIC" id="fig|99287.12.peg.3416"/>
<dbReference type="HOGENOM" id="CLU_040288_4_0_6"/>
<dbReference type="OMA" id="NRHLGYH"/>
<dbReference type="PhylomeDB" id="Q8ZLX5"/>
<dbReference type="BioCyc" id="SENT99287:STM3220-MONOMER"/>
<dbReference type="Proteomes" id="UP000001014">
    <property type="component" value="Chromosome"/>
</dbReference>
<dbReference type="GO" id="GO:0005737">
    <property type="term" value="C:cytoplasm"/>
    <property type="evidence" value="ECO:0007669"/>
    <property type="project" value="UniProtKB-SubCell"/>
</dbReference>
<dbReference type="GO" id="GO:0052916">
    <property type="term" value="F:23S rRNA (guanine(1835)-N(2))-methyltransferase activity"/>
    <property type="evidence" value="ECO:0007669"/>
    <property type="project" value="UniProtKB-EC"/>
</dbReference>
<dbReference type="GO" id="GO:0003676">
    <property type="term" value="F:nucleic acid binding"/>
    <property type="evidence" value="ECO:0007669"/>
    <property type="project" value="InterPro"/>
</dbReference>
<dbReference type="GO" id="GO:0008990">
    <property type="term" value="F:rRNA (guanine-N2-)-methyltransferase activity"/>
    <property type="evidence" value="ECO:0000318"/>
    <property type="project" value="GO_Central"/>
</dbReference>
<dbReference type="GO" id="GO:0070475">
    <property type="term" value="P:rRNA base methylation"/>
    <property type="evidence" value="ECO:0000318"/>
    <property type="project" value="GO_Central"/>
</dbReference>
<dbReference type="CDD" id="cd02440">
    <property type="entry name" value="AdoMet_MTases"/>
    <property type="match status" value="1"/>
</dbReference>
<dbReference type="FunFam" id="3.40.50.150:FF:000046">
    <property type="entry name" value="Ribosomal RNA large subunit methyltransferase G"/>
    <property type="match status" value="1"/>
</dbReference>
<dbReference type="FunFam" id="3.40.50.150:FF:000047">
    <property type="entry name" value="Ribosomal RNA large subunit methyltransferase G"/>
    <property type="match status" value="1"/>
</dbReference>
<dbReference type="Gene3D" id="3.40.50.150">
    <property type="entry name" value="Vaccinia Virus protein VP39"/>
    <property type="match status" value="2"/>
</dbReference>
<dbReference type="HAMAP" id="MF_01859">
    <property type="entry name" value="23SrRNA_methyltr_G"/>
    <property type="match status" value="1"/>
</dbReference>
<dbReference type="InterPro" id="IPR002052">
    <property type="entry name" value="DNA_methylase_N6_adenine_CS"/>
</dbReference>
<dbReference type="InterPro" id="IPR017237">
    <property type="entry name" value="rRNA_m2G-MeTrfase_RlmG"/>
</dbReference>
<dbReference type="InterPro" id="IPR046977">
    <property type="entry name" value="RsmC/RlmG"/>
</dbReference>
<dbReference type="InterPro" id="IPR029063">
    <property type="entry name" value="SAM-dependent_MTases_sf"/>
</dbReference>
<dbReference type="InterPro" id="IPR007848">
    <property type="entry name" value="Small_mtfrase_dom"/>
</dbReference>
<dbReference type="NCBIfam" id="NF011577">
    <property type="entry name" value="PRK15001.1"/>
    <property type="match status" value="1"/>
</dbReference>
<dbReference type="PANTHER" id="PTHR47816:SF5">
    <property type="entry name" value="RIBOSOMAL RNA LARGE SUBUNIT METHYLTRANSFERASE G"/>
    <property type="match status" value="1"/>
</dbReference>
<dbReference type="PANTHER" id="PTHR47816">
    <property type="entry name" value="RIBOSOMAL RNA SMALL SUBUNIT METHYLTRANSFERASE C"/>
    <property type="match status" value="1"/>
</dbReference>
<dbReference type="Pfam" id="PF05175">
    <property type="entry name" value="MTS"/>
    <property type="match status" value="1"/>
</dbReference>
<dbReference type="PIRSF" id="PIRSF037565">
    <property type="entry name" value="RRNA_m2G_Mtase_RsmD_prd"/>
    <property type="match status" value="1"/>
</dbReference>
<dbReference type="SUPFAM" id="SSF53335">
    <property type="entry name" value="S-adenosyl-L-methionine-dependent methyltransferases"/>
    <property type="match status" value="1"/>
</dbReference>
<organism>
    <name type="scientific">Salmonella typhimurium (strain LT2 / SGSC1412 / ATCC 700720)</name>
    <dbReference type="NCBI Taxonomy" id="99287"/>
    <lineage>
        <taxon>Bacteria</taxon>
        <taxon>Pseudomonadati</taxon>
        <taxon>Pseudomonadota</taxon>
        <taxon>Gammaproteobacteria</taxon>
        <taxon>Enterobacterales</taxon>
        <taxon>Enterobacteriaceae</taxon>
        <taxon>Salmonella</taxon>
    </lineage>
</organism>
<sequence length="378" mass="42272">MSHVDDGFRSLTLKRFPQTDDVNPLLAWEAADEYLLQQLDETEIRGPVLILNDTFGALSCALAEHSPYSIGDSYLSELGTRENLRHNGIAESSVTFLDSTADYPQAPGVVLIKVPKTLALLEQQLRALRKVVTAQTRIIAGAKARDIHTSTLELFEKVLGPTTTTLAWKKARLINCTFSHPQLADAPQTLSWKLEDTGWTIHNHANVFSRTGLDIGARFFMQHLPENLDGEIVDLGCGNGVIGLSLLAKNPQANVVFVDESPMAVDSSRLNVETNLPEAFERCEFMINNALSGVEPFRFNAVFCNPPFHQKHALTDNIAWEMFHHARRCLKINGELYIVANRHLDYFHKLKKIFGNCATIATNNKFVILKAVKQGRRR</sequence>
<gene>
    <name evidence="1" type="primary">rlmG</name>
    <name type="ordered locus">STM3220</name>
</gene>
<evidence type="ECO:0000255" key="1">
    <source>
        <dbReference type="HAMAP-Rule" id="MF_01859"/>
    </source>
</evidence>
<proteinExistence type="inferred from homology"/>
<comment type="function">
    <text evidence="1">Specifically methylates the guanine in position 1835 (m2G1835) of 23S rRNA.</text>
</comment>
<comment type="catalytic activity">
    <reaction evidence="1">
        <text>guanosine(1835) in 23S rRNA + S-adenosyl-L-methionine = N(2)-methylguanosine(1835) in 23S rRNA + S-adenosyl-L-homocysteine + H(+)</text>
        <dbReference type="Rhea" id="RHEA:42744"/>
        <dbReference type="Rhea" id="RHEA-COMP:10217"/>
        <dbReference type="Rhea" id="RHEA-COMP:10218"/>
        <dbReference type="ChEBI" id="CHEBI:15378"/>
        <dbReference type="ChEBI" id="CHEBI:57856"/>
        <dbReference type="ChEBI" id="CHEBI:59789"/>
        <dbReference type="ChEBI" id="CHEBI:74269"/>
        <dbReference type="ChEBI" id="CHEBI:74481"/>
        <dbReference type="EC" id="2.1.1.174"/>
    </reaction>
</comment>
<comment type="subcellular location">
    <subcellularLocation>
        <location evidence="1">Cytoplasm</location>
    </subcellularLocation>
</comment>
<comment type="similarity">
    <text evidence="1">Belongs to the methyltransferase superfamily. RlmG family.</text>
</comment>
<keyword id="KW-0963">Cytoplasm</keyword>
<keyword id="KW-0489">Methyltransferase</keyword>
<keyword id="KW-1185">Reference proteome</keyword>
<keyword id="KW-0698">rRNA processing</keyword>
<keyword id="KW-0949">S-adenosyl-L-methionine</keyword>
<keyword id="KW-0808">Transferase</keyword>
<accession>Q8ZLX5</accession>
<protein>
    <recommendedName>
        <fullName evidence="1">Ribosomal RNA large subunit methyltransferase G</fullName>
        <ecNumber evidence="1">2.1.1.174</ecNumber>
    </recommendedName>
    <alternativeName>
        <fullName evidence="1">23S rRNA m2G1835 methyltransferase</fullName>
    </alternativeName>
    <alternativeName>
        <fullName evidence="1">rRNA (guanine-N(2)-)-methyltransferase RlmG</fullName>
    </alternativeName>
</protein>
<reference key="1">
    <citation type="journal article" date="2001" name="Nature">
        <title>Complete genome sequence of Salmonella enterica serovar Typhimurium LT2.</title>
        <authorList>
            <person name="McClelland M."/>
            <person name="Sanderson K.E."/>
            <person name="Spieth J."/>
            <person name="Clifton S.W."/>
            <person name="Latreille P."/>
            <person name="Courtney L."/>
            <person name="Porwollik S."/>
            <person name="Ali J."/>
            <person name="Dante M."/>
            <person name="Du F."/>
            <person name="Hou S."/>
            <person name="Layman D."/>
            <person name="Leonard S."/>
            <person name="Nguyen C."/>
            <person name="Scott K."/>
            <person name="Holmes A."/>
            <person name="Grewal N."/>
            <person name="Mulvaney E."/>
            <person name="Ryan E."/>
            <person name="Sun H."/>
            <person name="Florea L."/>
            <person name="Miller W."/>
            <person name="Stoneking T."/>
            <person name="Nhan M."/>
            <person name="Waterston R."/>
            <person name="Wilson R.K."/>
        </authorList>
    </citation>
    <scope>NUCLEOTIDE SEQUENCE [LARGE SCALE GENOMIC DNA]</scope>
    <source>
        <strain>LT2 / SGSC1412 / ATCC 700720</strain>
    </source>
</reference>
<name>RLMG_SALTY</name>
<feature type="chain" id="PRO_0000366502" description="Ribosomal RNA large subunit methyltransferase G">
    <location>
        <begin position="1"/>
        <end position="378"/>
    </location>
</feature>